<feature type="chain" id="PRO_1000021323" description="Shikimate dehydrogenase (NADP(+))">
    <location>
        <begin position="1"/>
        <end position="279"/>
    </location>
</feature>
<feature type="active site" description="Proton acceptor" evidence="1">
    <location>
        <position position="71"/>
    </location>
</feature>
<feature type="binding site" evidence="1">
    <location>
        <begin position="20"/>
        <end position="22"/>
    </location>
    <ligand>
        <name>shikimate</name>
        <dbReference type="ChEBI" id="CHEBI:36208"/>
    </ligand>
</feature>
<feature type="binding site" evidence="1">
    <location>
        <position position="67"/>
    </location>
    <ligand>
        <name>shikimate</name>
        <dbReference type="ChEBI" id="CHEBI:36208"/>
    </ligand>
</feature>
<feature type="binding site" evidence="1">
    <location>
        <position position="83"/>
    </location>
    <ligand>
        <name>NADP(+)</name>
        <dbReference type="ChEBI" id="CHEBI:58349"/>
    </ligand>
</feature>
<feature type="binding site" evidence="1">
    <location>
        <position position="92"/>
    </location>
    <ligand>
        <name>shikimate</name>
        <dbReference type="ChEBI" id="CHEBI:36208"/>
    </ligand>
</feature>
<feature type="binding site" evidence="1">
    <location>
        <position position="108"/>
    </location>
    <ligand>
        <name>shikimate</name>
        <dbReference type="ChEBI" id="CHEBI:36208"/>
    </ligand>
</feature>
<feature type="binding site" evidence="1">
    <location>
        <begin position="134"/>
        <end position="138"/>
    </location>
    <ligand>
        <name>NADP(+)</name>
        <dbReference type="ChEBI" id="CHEBI:58349"/>
    </ligand>
</feature>
<feature type="binding site" evidence="1">
    <location>
        <position position="223"/>
    </location>
    <ligand>
        <name>NADP(+)</name>
        <dbReference type="ChEBI" id="CHEBI:58349"/>
    </ligand>
</feature>
<feature type="binding site" evidence="1">
    <location>
        <position position="225"/>
    </location>
    <ligand>
        <name>shikimate</name>
        <dbReference type="ChEBI" id="CHEBI:36208"/>
    </ligand>
</feature>
<feature type="binding site" evidence="1">
    <location>
        <position position="246"/>
    </location>
    <ligand>
        <name>NADP(+)</name>
        <dbReference type="ChEBI" id="CHEBI:58349"/>
    </ligand>
</feature>
<proteinExistence type="inferred from homology"/>
<accession>A3PNT1</accession>
<sequence length="279" mass="29810">MTELTRIPLAGVIGSPIAHSRSPALHGYWLKRYGLKGHYIPMDVAQADLRDVLAAMPRMGFVGCNVTIPHKESVIGLADIVTDRAALIGAANTLIFRKDGKIYADNTDGTGFTANLRQNAPAWQPQSGPAVVWGAGGAARAVIAALIEVGVPEIRLANRSRARADALRSDFGAKVHVHDWVQAGNILEDAMTVVNTTSLGMVGKPEFRVPLDALNPKAVVTDLVYAPLRTRLLVEAEAAGCRTVDGLGMLLHQAAPGFERWFGVRPEVDEETRAAVLAA</sequence>
<name>AROE_CERS1</name>
<evidence type="ECO:0000255" key="1">
    <source>
        <dbReference type="HAMAP-Rule" id="MF_00222"/>
    </source>
</evidence>
<comment type="function">
    <text evidence="1">Involved in the biosynthesis of the chorismate, which leads to the biosynthesis of aromatic amino acids. Catalyzes the reversible NADPH linked reduction of 3-dehydroshikimate (DHSA) to yield shikimate (SA).</text>
</comment>
<comment type="catalytic activity">
    <reaction evidence="1">
        <text>shikimate + NADP(+) = 3-dehydroshikimate + NADPH + H(+)</text>
        <dbReference type="Rhea" id="RHEA:17737"/>
        <dbReference type="ChEBI" id="CHEBI:15378"/>
        <dbReference type="ChEBI" id="CHEBI:16630"/>
        <dbReference type="ChEBI" id="CHEBI:36208"/>
        <dbReference type="ChEBI" id="CHEBI:57783"/>
        <dbReference type="ChEBI" id="CHEBI:58349"/>
        <dbReference type="EC" id="1.1.1.25"/>
    </reaction>
</comment>
<comment type="pathway">
    <text evidence="1">Metabolic intermediate biosynthesis; chorismate biosynthesis; chorismate from D-erythrose 4-phosphate and phosphoenolpyruvate: step 4/7.</text>
</comment>
<comment type="subunit">
    <text evidence="1">Homodimer.</text>
</comment>
<comment type="similarity">
    <text evidence="1">Belongs to the shikimate dehydrogenase family.</text>
</comment>
<keyword id="KW-0028">Amino-acid biosynthesis</keyword>
<keyword id="KW-0057">Aromatic amino acid biosynthesis</keyword>
<keyword id="KW-0521">NADP</keyword>
<keyword id="KW-0560">Oxidoreductase</keyword>
<organism>
    <name type="scientific">Cereibacter sphaeroides (strain ATCC 17029 / ATH 2.4.9)</name>
    <name type="common">Rhodobacter sphaeroides</name>
    <dbReference type="NCBI Taxonomy" id="349101"/>
    <lineage>
        <taxon>Bacteria</taxon>
        <taxon>Pseudomonadati</taxon>
        <taxon>Pseudomonadota</taxon>
        <taxon>Alphaproteobacteria</taxon>
        <taxon>Rhodobacterales</taxon>
        <taxon>Paracoccaceae</taxon>
        <taxon>Cereibacter</taxon>
    </lineage>
</organism>
<reference key="1">
    <citation type="submission" date="2007-02" db="EMBL/GenBank/DDBJ databases">
        <title>Complete sequence of chromosome 1 of Rhodobacter sphaeroides ATCC 17029.</title>
        <authorList>
            <person name="Copeland A."/>
            <person name="Lucas S."/>
            <person name="Lapidus A."/>
            <person name="Barry K."/>
            <person name="Detter J.C."/>
            <person name="Glavina del Rio T."/>
            <person name="Hammon N."/>
            <person name="Israni S."/>
            <person name="Dalin E."/>
            <person name="Tice H."/>
            <person name="Pitluck S."/>
            <person name="Kiss H."/>
            <person name="Brettin T."/>
            <person name="Bruce D."/>
            <person name="Han C."/>
            <person name="Tapia R."/>
            <person name="Gilna P."/>
            <person name="Schmutz J."/>
            <person name="Larimer F."/>
            <person name="Land M."/>
            <person name="Hauser L."/>
            <person name="Kyrpides N."/>
            <person name="Mikhailova N."/>
            <person name="Richardson P."/>
            <person name="Mackenzie C."/>
            <person name="Choudhary M."/>
            <person name="Donohue T.J."/>
            <person name="Kaplan S."/>
        </authorList>
    </citation>
    <scope>NUCLEOTIDE SEQUENCE [LARGE SCALE GENOMIC DNA]</scope>
    <source>
        <strain>ATCC 17029 / ATH 2.4.9</strain>
    </source>
</reference>
<protein>
    <recommendedName>
        <fullName evidence="1">Shikimate dehydrogenase (NADP(+))</fullName>
        <shortName evidence="1">SDH</shortName>
        <ecNumber evidence="1">1.1.1.25</ecNumber>
    </recommendedName>
</protein>
<gene>
    <name evidence="1" type="primary">aroE</name>
    <name type="ordered locus">Rsph17029_2895</name>
</gene>
<dbReference type="EC" id="1.1.1.25" evidence="1"/>
<dbReference type="EMBL" id="CP000577">
    <property type="protein sequence ID" value="ABN77997.1"/>
    <property type="molecule type" value="Genomic_DNA"/>
</dbReference>
<dbReference type="RefSeq" id="WP_011841953.1">
    <property type="nucleotide sequence ID" value="NC_009049.1"/>
</dbReference>
<dbReference type="SMR" id="A3PNT1"/>
<dbReference type="KEGG" id="rsh:Rsph17029_2895"/>
<dbReference type="HOGENOM" id="CLU_044063_2_0_5"/>
<dbReference type="UniPathway" id="UPA00053">
    <property type="reaction ID" value="UER00087"/>
</dbReference>
<dbReference type="GO" id="GO:0005829">
    <property type="term" value="C:cytosol"/>
    <property type="evidence" value="ECO:0007669"/>
    <property type="project" value="TreeGrafter"/>
</dbReference>
<dbReference type="GO" id="GO:0050661">
    <property type="term" value="F:NADP binding"/>
    <property type="evidence" value="ECO:0007669"/>
    <property type="project" value="InterPro"/>
</dbReference>
<dbReference type="GO" id="GO:0004764">
    <property type="term" value="F:shikimate 3-dehydrogenase (NADP+) activity"/>
    <property type="evidence" value="ECO:0007669"/>
    <property type="project" value="UniProtKB-UniRule"/>
</dbReference>
<dbReference type="GO" id="GO:0008652">
    <property type="term" value="P:amino acid biosynthetic process"/>
    <property type="evidence" value="ECO:0007669"/>
    <property type="project" value="UniProtKB-KW"/>
</dbReference>
<dbReference type="GO" id="GO:0009073">
    <property type="term" value="P:aromatic amino acid family biosynthetic process"/>
    <property type="evidence" value="ECO:0007669"/>
    <property type="project" value="UniProtKB-KW"/>
</dbReference>
<dbReference type="GO" id="GO:0009423">
    <property type="term" value="P:chorismate biosynthetic process"/>
    <property type="evidence" value="ECO:0007669"/>
    <property type="project" value="UniProtKB-UniRule"/>
</dbReference>
<dbReference type="GO" id="GO:0019632">
    <property type="term" value="P:shikimate metabolic process"/>
    <property type="evidence" value="ECO:0007669"/>
    <property type="project" value="InterPro"/>
</dbReference>
<dbReference type="CDD" id="cd01065">
    <property type="entry name" value="NAD_bind_Shikimate_DH"/>
    <property type="match status" value="1"/>
</dbReference>
<dbReference type="Gene3D" id="3.40.50.10860">
    <property type="entry name" value="Leucine Dehydrogenase, chain A, domain 1"/>
    <property type="match status" value="1"/>
</dbReference>
<dbReference type="Gene3D" id="3.40.50.720">
    <property type="entry name" value="NAD(P)-binding Rossmann-like Domain"/>
    <property type="match status" value="1"/>
</dbReference>
<dbReference type="HAMAP" id="MF_00222">
    <property type="entry name" value="Shikimate_DH_AroE"/>
    <property type="match status" value="1"/>
</dbReference>
<dbReference type="InterPro" id="IPR046346">
    <property type="entry name" value="Aminoacid_DH-like_N_sf"/>
</dbReference>
<dbReference type="InterPro" id="IPR036291">
    <property type="entry name" value="NAD(P)-bd_dom_sf"/>
</dbReference>
<dbReference type="InterPro" id="IPR041121">
    <property type="entry name" value="SDH_C"/>
</dbReference>
<dbReference type="InterPro" id="IPR011342">
    <property type="entry name" value="Shikimate_DH"/>
</dbReference>
<dbReference type="InterPro" id="IPR013708">
    <property type="entry name" value="Shikimate_DH-bd_N"/>
</dbReference>
<dbReference type="InterPro" id="IPR022893">
    <property type="entry name" value="Shikimate_DH_fam"/>
</dbReference>
<dbReference type="InterPro" id="IPR006151">
    <property type="entry name" value="Shikm_DH/Glu-tRNA_Rdtase"/>
</dbReference>
<dbReference type="NCBIfam" id="TIGR00507">
    <property type="entry name" value="aroE"/>
    <property type="match status" value="1"/>
</dbReference>
<dbReference type="NCBIfam" id="NF001312">
    <property type="entry name" value="PRK00258.1-4"/>
    <property type="match status" value="1"/>
</dbReference>
<dbReference type="PANTHER" id="PTHR21089:SF1">
    <property type="entry name" value="BIFUNCTIONAL 3-DEHYDROQUINATE DEHYDRATASE_SHIKIMATE DEHYDROGENASE, CHLOROPLASTIC"/>
    <property type="match status" value="1"/>
</dbReference>
<dbReference type="PANTHER" id="PTHR21089">
    <property type="entry name" value="SHIKIMATE DEHYDROGENASE"/>
    <property type="match status" value="1"/>
</dbReference>
<dbReference type="Pfam" id="PF18317">
    <property type="entry name" value="SDH_C"/>
    <property type="match status" value="1"/>
</dbReference>
<dbReference type="Pfam" id="PF01488">
    <property type="entry name" value="Shikimate_DH"/>
    <property type="match status" value="1"/>
</dbReference>
<dbReference type="Pfam" id="PF08501">
    <property type="entry name" value="Shikimate_dh_N"/>
    <property type="match status" value="1"/>
</dbReference>
<dbReference type="SUPFAM" id="SSF53223">
    <property type="entry name" value="Aminoacid dehydrogenase-like, N-terminal domain"/>
    <property type="match status" value="1"/>
</dbReference>
<dbReference type="SUPFAM" id="SSF51735">
    <property type="entry name" value="NAD(P)-binding Rossmann-fold domains"/>
    <property type="match status" value="1"/>
</dbReference>